<organism>
    <name type="scientific">Aspergillus flavus (strain ATCC 200026 / FGSC A1120 / IAM 13836 / NRRL 3357 / JCM 12722 / SRRC 167)</name>
    <dbReference type="NCBI Taxonomy" id="332952"/>
    <lineage>
        <taxon>Eukaryota</taxon>
        <taxon>Fungi</taxon>
        <taxon>Dikarya</taxon>
        <taxon>Ascomycota</taxon>
        <taxon>Pezizomycotina</taxon>
        <taxon>Eurotiomycetes</taxon>
        <taxon>Eurotiomycetidae</taxon>
        <taxon>Eurotiales</taxon>
        <taxon>Aspergillaceae</taxon>
        <taxon>Aspergillus</taxon>
        <taxon>Aspergillus subgen. Circumdati</taxon>
    </lineage>
</organism>
<proteinExistence type="inferred from homology"/>
<sequence>MKSSTFGMLALAAAAKLVSAHATVHAVWINDVDQGEGNSESGYIRSPPSNSPITDVTSKDMTCNVNNKATAKTLEVKAGDKITFEWHHDSRSDSDDIIASSHKGPIMVYMAPTEKGTAGNGWVKIAEDGYTDGTWAVDTLIKNRGKHSVTVPDVAAGEYLFRPEIIALHEGNRQGGAQFYMECVQVKVTSSGSKTLPEGVSIPGAYTATDKGILFDIYNSFDSYPFPGPAVWDGASGSSSSPSASASASAPAATSAAPAPSSFTTIAKQPATSSTEAPSTENTSTTSTIVSTTAAASATAPATPSSTSAIASSAASTNSVPQPSSNAGGAVKEWYQCGGLNYKGSTQCEEGLTCKKWNPYYYQCISA</sequence>
<gene>
    <name type="primary">eglD</name>
    <name type="ORF">AFLA_077840</name>
</gene>
<accession>B8MXJ7</accession>
<evidence type="ECO:0000250" key="1">
    <source>
        <dbReference type="UniProtKB" id="A0A223GEC9"/>
    </source>
</evidence>
<evidence type="ECO:0000250" key="2">
    <source>
        <dbReference type="UniProtKB" id="Q1K8B6"/>
    </source>
</evidence>
<evidence type="ECO:0000250" key="3">
    <source>
        <dbReference type="UniProtKB" id="Q2US83"/>
    </source>
</evidence>
<evidence type="ECO:0000250" key="4">
    <source>
        <dbReference type="UniProtKB" id="Q4WP32"/>
    </source>
</evidence>
<evidence type="ECO:0000250" key="5">
    <source>
        <dbReference type="UniProtKB" id="Q7S439"/>
    </source>
</evidence>
<evidence type="ECO:0000255" key="6"/>
<evidence type="ECO:0000255" key="7">
    <source>
        <dbReference type="PROSITE-ProRule" id="PRU00597"/>
    </source>
</evidence>
<evidence type="ECO:0000256" key="8">
    <source>
        <dbReference type="SAM" id="MobiDB-lite"/>
    </source>
</evidence>
<evidence type="ECO:0000305" key="9"/>
<dbReference type="EC" id="1.14.99.56" evidence="3"/>
<dbReference type="EMBL" id="EQ963472">
    <property type="protein sequence ID" value="EED57089.1"/>
    <property type="molecule type" value="Genomic_DNA"/>
</dbReference>
<dbReference type="RefSeq" id="XP_002372701.1">
    <property type="nucleotide sequence ID" value="XM_002372660.1"/>
</dbReference>
<dbReference type="SMR" id="B8MXJ7"/>
<dbReference type="STRING" id="332952.B8MXJ7"/>
<dbReference type="GlyCosmos" id="B8MXJ7">
    <property type="glycosylation" value="1 site, No reported glycans"/>
</dbReference>
<dbReference type="EnsemblFungi" id="EED57089">
    <property type="protein sequence ID" value="EED57089"/>
    <property type="gene ID" value="AFLA_077840"/>
</dbReference>
<dbReference type="VEuPathDB" id="FungiDB:AFLA_003339"/>
<dbReference type="eggNOG" id="ENOG502RXMI">
    <property type="taxonomic scope" value="Eukaryota"/>
</dbReference>
<dbReference type="HOGENOM" id="CLU_031730_0_0_1"/>
<dbReference type="OMA" id="YIDSPPN"/>
<dbReference type="GO" id="GO:0005576">
    <property type="term" value="C:extracellular region"/>
    <property type="evidence" value="ECO:0007669"/>
    <property type="project" value="UniProtKB-SubCell"/>
</dbReference>
<dbReference type="GO" id="GO:0008810">
    <property type="term" value="F:cellulase activity"/>
    <property type="evidence" value="ECO:0007669"/>
    <property type="project" value="UniProtKB-EC"/>
</dbReference>
<dbReference type="GO" id="GO:0030248">
    <property type="term" value="F:cellulose binding"/>
    <property type="evidence" value="ECO:0007669"/>
    <property type="project" value="InterPro"/>
</dbReference>
<dbReference type="GO" id="GO:0046872">
    <property type="term" value="F:metal ion binding"/>
    <property type="evidence" value="ECO:0007669"/>
    <property type="project" value="UniProtKB-KW"/>
</dbReference>
<dbReference type="GO" id="GO:0004497">
    <property type="term" value="F:monooxygenase activity"/>
    <property type="evidence" value="ECO:0007669"/>
    <property type="project" value="UniProtKB-KW"/>
</dbReference>
<dbReference type="GO" id="GO:0030245">
    <property type="term" value="P:cellulose catabolic process"/>
    <property type="evidence" value="ECO:0007669"/>
    <property type="project" value="UniProtKB-KW"/>
</dbReference>
<dbReference type="CDD" id="cd21175">
    <property type="entry name" value="LPMO_AA9"/>
    <property type="match status" value="1"/>
</dbReference>
<dbReference type="Gene3D" id="2.70.50.70">
    <property type="match status" value="1"/>
</dbReference>
<dbReference type="InterPro" id="IPR049892">
    <property type="entry name" value="AA9"/>
</dbReference>
<dbReference type="InterPro" id="IPR005103">
    <property type="entry name" value="AA9_LPMO"/>
</dbReference>
<dbReference type="InterPro" id="IPR035971">
    <property type="entry name" value="CBD_sf"/>
</dbReference>
<dbReference type="InterPro" id="IPR000254">
    <property type="entry name" value="Cellulose-bd_dom_fun"/>
</dbReference>
<dbReference type="PANTHER" id="PTHR33353:SF17">
    <property type="entry name" value="ENDO-BETA-1,4-GLUCANASE D"/>
    <property type="match status" value="1"/>
</dbReference>
<dbReference type="PANTHER" id="PTHR33353">
    <property type="entry name" value="PUTATIVE (AFU_ORTHOLOGUE AFUA_1G12560)-RELATED"/>
    <property type="match status" value="1"/>
</dbReference>
<dbReference type="Pfam" id="PF03443">
    <property type="entry name" value="AA9"/>
    <property type="match status" value="1"/>
</dbReference>
<dbReference type="Pfam" id="PF00734">
    <property type="entry name" value="CBM_1"/>
    <property type="match status" value="1"/>
</dbReference>
<dbReference type="SMART" id="SM00236">
    <property type="entry name" value="fCBD"/>
    <property type="match status" value="1"/>
</dbReference>
<dbReference type="SUPFAM" id="SSF57180">
    <property type="entry name" value="Cellulose-binding domain"/>
    <property type="match status" value="1"/>
</dbReference>
<dbReference type="PROSITE" id="PS00562">
    <property type="entry name" value="CBM1_1"/>
    <property type="match status" value="1"/>
</dbReference>
<dbReference type="PROSITE" id="PS51164">
    <property type="entry name" value="CBM1_2"/>
    <property type="match status" value="1"/>
</dbReference>
<name>LP9A_ASPFN</name>
<feature type="signal peptide" evidence="6">
    <location>
        <begin position="1"/>
        <end position="20"/>
    </location>
</feature>
<feature type="chain" id="PRO_0000394062" description="AA9 family lytic polysaccharide monooxygenase A">
    <location>
        <begin position="21"/>
        <end position="367"/>
    </location>
</feature>
<feature type="domain" description="CBM1" evidence="7">
    <location>
        <begin position="329"/>
        <end position="365"/>
    </location>
</feature>
<feature type="region of interest" description="Disordered" evidence="8">
    <location>
        <begin position="37"/>
        <end position="56"/>
    </location>
</feature>
<feature type="region of interest" description="Disordered" evidence="8">
    <location>
        <begin position="234"/>
        <end position="287"/>
    </location>
</feature>
<feature type="compositionally biased region" description="Low complexity" evidence="8">
    <location>
        <begin position="235"/>
        <end position="262"/>
    </location>
</feature>
<feature type="compositionally biased region" description="Low complexity" evidence="8">
    <location>
        <begin position="270"/>
        <end position="287"/>
    </location>
</feature>
<feature type="binding site" evidence="1">
    <location>
        <position position="21"/>
    </location>
    <ligand>
        <name>Cu(2+)</name>
        <dbReference type="ChEBI" id="CHEBI:29036"/>
        <note>catalytic</note>
    </ligand>
</feature>
<feature type="binding site" evidence="1">
    <location>
        <position position="102"/>
    </location>
    <ligand>
        <name>Cu(2+)</name>
        <dbReference type="ChEBI" id="CHEBI:29036"/>
        <note>catalytic</note>
    </ligand>
</feature>
<feature type="binding site" evidence="2">
    <location>
        <position position="169"/>
    </location>
    <ligand>
        <name>O2</name>
        <dbReference type="ChEBI" id="CHEBI:15379"/>
    </ligand>
</feature>
<feature type="binding site" evidence="1">
    <location>
        <position position="180"/>
    </location>
    <ligand>
        <name>Cu(2+)</name>
        <dbReference type="ChEBI" id="CHEBI:29036"/>
        <note>catalytic</note>
    </ligand>
</feature>
<feature type="glycosylation site" description="N-linked (GlcNAc...) asparagine" evidence="6">
    <location>
        <position position="282"/>
    </location>
</feature>
<feature type="disulfide bond" evidence="1">
    <location>
        <begin position="63"/>
        <end position="183"/>
    </location>
</feature>
<reference key="1">
    <citation type="journal article" date="2015" name="Genome Announc.">
        <title>Genome sequence of Aspergillus flavus NRRL 3357, a strain that causes aflatoxin contamination of food and feed.</title>
        <authorList>
            <person name="Nierman W.C."/>
            <person name="Yu J."/>
            <person name="Fedorova-Abrams N.D."/>
            <person name="Losada L."/>
            <person name="Cleveland T.E."/>
            <person name="Bhatnagar D."/>
            <person name="Bennett J.W."/>
            <person name="Dean R."/>
            <person name="Payne G.A."/>
        </authorList>
    </citation>
    <scope>NUCLEOTIDE SEQUENCE [LARGE SCALE GENOMIC DNA]</scope>
    <source>
        <strain>ATCC 200026 / FGSC A1120 / IAM 13836 / NRRL 3357 / JCM 12722 / SRRC 167</strain>
    </source>
</reference>
<comment type="function">
    <text evidence="3">Lytic polysaccharide monooxygenase (LPMO) that depolymerizes crystalline and amorphous polysaccharides via the oxidation of scissile alpha- or beta-(1-4)-glycosidic bonds, yielding C4 oxidation products (By similarity). Catalysis by LPMOs requires the reduction of the active-site copper from Cu(II) to Cu(I) by a reducing agent and H(2)O(2) or O(2) as a cosubstrate (By similarity).</text>
</comment>
<comment type="catalytic activity">
    <reaction evidence="3">
        <text>[(1-&gt;4)-beta-D-glucosyl]n+m + reduced acceptor + O2 = 4-dehydro-beta-D-glucosyl-[(1-&gt;4)-beta-D-glucosyl]n-1 + [(1-&gt;4)-beta-D-glucosyl]m + acceptor + H2O.</text>
        <dbReference type="EC" id="1.14.99.56"/>
    </reaction>
</comment>
<comment type="cofactor">
    <cofactor evidence="4">
        <name>Cu(2+)</name>
        <dbReference type="ChEBI" id="CHEBI:29036"/>
    </cofactor>
    <text evidence="4">Binds 1 copper ion per subunit.</text>
</comment>
<comment type="subcellular location">
    <subcellularLocation>
        <location evidence="3">Secreted</location>
    </subcellularLocation>
</comment>
<comment type="domain">
    <text evidence="5">Has a modular structure: an endo-beta-1,4-glucanase catalytic module at the N-terminus, a linker rich in serines and threonines, and a C-terminal carbohydrate-binding module (CBM). The CBM domain is essential for binding to and subsequent oxidative degradation of polysaccharide substrate.</text>
</comment>
<comment type="biotechnology">
    <text evidence="4">Lignocellulose is the most abundant polymeric composite on Earth and is a recalcitrant but promising renewable substrate for industrial biotechnology applications. Together with cellobiose dehydrogenases (CDHs) an enzymatic system capable of oxidative cellulose cleavage is formed, which increases the efficiency of cellulases and put LPMOs at focus of biofuel research.</text>
</comment>
<comment type="similarity">
    <text evidence="9">Belongs to the polysaccharide monooxygenase AA9 family.</text>
</comment>
<protein>
    <recommendedName>
        <fullName evidence="3">AA9 family lytic polysaccharide monooxygenase A</fullName>
        <shortName evidence="3">AA9A</shortName>
        <ecNumber evidence="3">1.14.99.56</ecNumber>
    </recommendedName>
    <alternativeName>
        <fullName evidence="9">Cellulase AA9A</fullName>
    </alternativeName>
    <alternativeName>
        <fullName evidence="9">Endo-beta-1,4-glucanase AA9A</fullName>
        <shortName evidence="9">Endoglucanase AA9A</shortName>
    </alternativeName>
    <alternativeName>
        <fullName evidence="9">Glycosyl hydrolase 61 family protein AA9A</fullName>
    </alternativeName>
</protein>
<keyword id="KW-0119">Carbohydrate metabolism</keyword>
<keyword id="KW-0136">Cellulose degradation</keyword>
<keyword id="KW-0186">Copper</keyword>
<keyword id="KW-1015">Disulfide bond</keyword>
<keyword id="KW-0325">Glycoprotein</keyword>
<keyword id="KW-0479">Metal-binding</keyword>
<keyword id="KW-0503">Monooxygenase</keyword>
<keyword id="KW-0560">Oxidoreductase</keyword>
<keyword id="KW-0624">Polysaccharide degradation</keyword>
<keyword id="KW-0964">Secreted</keyword>
<keyword id="KW-0732">Signal</keyword>